<dbReference type="EMBL" id="AE014297">
    <property type="protein sequence ID" value="AAF54974.2"/>
    <property type="molecule type" value="Genomic_DNA"/>
</dbReference>
<dbReference type="EMBL" id="AE014297">
    <property type="protein sequence ID" value="AAN13587.2"/>
    <property type="molecule type" value="Genomic_DNA"/>
</dbReference>
<dbReference type="EMBL" id="AY118508">
    <property type="protein sequence ID" value="AAM49877.1"/>
    <property type="molecule type" value="mRNA"/>
</dbReference>
<dbReference type="RefSeq" id="NP_650304.2">
    <molecule id="Q9VFS5-2"/>
    <property type="nucleotide sequence ID" value="NM_142047.4"/>
</dbReference>
<dbReference type="RefSeq" id="NP_731849.2">
    <molecule id="Q9VFS5-1"/>
    <property type="nucleotide sequence ID" value="NM_169548.3"/>
</dbReference>
<dbReference type="RefSeq" id="NP_731850.2">
    <molecule id="Q9VFS5-1"/>
    <property type="nucleotide sequence ID" value="NM_169549.2"/>
</dbReference>
<dbReference type="PDB" id="4WSF">
    <property type="method" value="X-ray"/>
    <property type="resolution" value="1.50 A"/>
    <property type="chains" value="A=2-123"/>
</dbReference>
<dbReference type="PDBsum" id="4WSF"/>
<dbReference type="SMR" id="Q9VFS5"/>
<dbReference type="BioGRID" id="66755">
    <property type="interactions" value="12"/>
</dbReference>
<dbReference type="FunCoup" id="Q9VFS5">
    <property type="interactions" value="2664"/>
</dbReference>
<dbReference type="IntAct" id="Q9VFS5">
    <property type="interactions" value="2"/>
</dbReference>
<dbReference type="STRING" id="7227.FBpp0311112"/>
<dbReference type="GlyGen" id="Q9VFS5">
    <property type="glycosylation" value="1 site"/>
</dbReference>
<dbReference type="PaxDb" id="7227-FBpp0082285"/>
<dbReference type="DNASU" id="41675"/>
<dbReference type="EnsemblMetazoa" id="FBtr0082817">
    <molecule id="Q9VFS5-1"/>
    <property type="protein sequence ID" value="FBpp0082285"/>
    <property type="gene ID" value="FBgn0024555"/>
</dbReference>
<dbReference type="EnsemblMetazoa" id="FBtr0114604">
    <molecule id="Q9VFS5-2"/>
    <property type="protein sequence ID" value="FBpp0113096"/>
    <property type="gene ID" value="FBgn0024555"/>
</dbReference>
<dbReference type="EnsemblMetazoa" id="FBtr0344783">
    <molecule id="Q9VFS5-1"/>
    <property type="protein sequence ID" value="FBpp0311112"/>
    <property type="gene ID" value="FBgn0024555"/>
</dbReference>
<dbReference type="GeneID" id="41675"/>
<dbReference type="KEGG" id="dme:Dmel_CG9351"/>
<dbReference type="UCSC" id="CG9351-RB">
    <molecule id="Q9VFS5-1"/>
    <property type="organism name" value="d. melanogaster"/>
</dbReference>
<dbReference type="UCSC" id="CG9351-RD">
    <property type="organism name" value="d. melanogaster"/>
</dbReference>
<dbReference type="AGR" id="FB:FBgn0024555"/>
<dbReference type="CTD" id="41675"/>
<dbReference type="FlyBase" id="FBgn0024555">
    <property type="gene designation" value="flfl"/>
</dbReference>
<dbReference type="VEuPathDB" id="VectorBase:FBgn0024555"/>
<dbReference type="eggNOG" id="KOG2175">
    <property type="taxonomic scope" value="Eukaryota"/>
</dbReference>
<dbReference type="GeneTree" id="ENSGT00390000018199"/>
<dbReference type="InParanoid" id="Q9VFS5"/>
<dbReference type="OMA" id="ALMTHNN"/>
<dbReference type="OrthoDB" id="27483at2759"/>
<dbReference type="PhylomeDB" id="Q9VFS5"/>
<dbReference type="BioGRID-ORCS" id="41675">
    <property type="hits" value="0 hits in 3 CRISPR screens"/>
</dbReference>
<dbReference type="ChiTaRS" id="flfl">
    <property type="organism name" value="fly"/>
</dbReference>
<dbReference type="EvolutionaryTrace" id="Q9VFS5"/>
<dbReference type="GenomeRNAi" id="41675"/>
<dbReference type="PRO" id="PR:Q9VFS5"/>
<dbReference type="Proteomes" id="UP000000803">
    <property type="component" value="Chromosome 3R"/>
</dbReference>
<dbReference type="Bgee" id="FBgn0024555">
    <property type="expression patterns" value="Expressed in wing disc and 267 other cell types or tissues"/>
</dbReference>
<dbReference type="ExpressionAtlas" id="Q9VFS5">
    <property type="expression patterns" value="baseline and differential"/>
</dbReference>
<dbReference type="GO" id="GO:0000775">
    <property type="term" value="C:chromosome, centromeric region"/>
    <property type="evidence" value="ECO:0000353"/>
    <property type="project" value="FlyBase"/>
</dbReference>
<dbReference type="GO" id="GO:0005737">
    <property type="term" value="C:cytoplasm"/>
    <property type="evidence" value="ECO:0000314"/>
    <property type="project" value="FlyBase"/>
</dbReference>
<dbReference type="GO" id="GO:0016020">
    <property type="term" value="C:membrane"/>
    <property type="evidence" value="ECO:0007669"/>
    <property type="project" value="UniProtKB-SubCell"/>
</dbReference>
<dbReference type="GO" id="GO:0005654">
    <property type="term" value="C:nucleoplasm"/>
    <property type="evidence" value="ECO:0000318"/>
    <property type="project" value="GO_Central"/>
</dbReference>
<dbReference type="GO" id="GO:0005634">
    <property type="term" value="C:nucleus"/>
    <property type="evidence" value="ECO:0000314"/>
    <property type="project" value="FlyBase"/>
</dbReference>
<dbReference type="GO" id="GO:0030289">
    <property type="term" value="C:protein phosphatase 4 complex"/>
    <property type="evidence" value="ECO:0000314"/>
    <property type="project" value="UniProtKB"/>
</dbReference>
<dbReference type="GO" id="GO:0072542">
    <property type="term" value="F:protein phosphatase activator activity"/>
    <property type="evidence" value="ECO:0000318"/>
    <property type="project" value="GO_Central"/>
</dbReference>
<dbReference type="GO" id="GO:0055059">
    <property type="term" value="P:asymmetric neuroblast division"/>
    <property type="evidence" value="ECO:0000315"/>
    <property type="project" value="FlyBase"/>
</dbReference>
<dbReference type="GO" id="GO:0045175">
    <property type="term" value="P:basal protein localization"/>
    <property type="evidence" value="ECO:0000315"/>
    <property type="project" value="FlyBase"/>
</dbReference>
<dbReference type="GO" id="GO:0006974">
    <property type="term" value="P:DNA damage response"/>
    <property type="evidence" value="ECO:0000318"/>
    <property type="project" value="GO_Central"/>
</dbReference>
<dbReference type="GO" id="GO:0006281">
    <property type="term" value="P:DNA repair"/>
    <property type="evidence" value="ECO:0000315"/>
    <property type="project" value="UniProtKB"/>
</dbReference>
<dbReference type="GO" id="GO:0061060">
    <property type="term" value="P:negative regulation of peptidoglycan recognition protein signaling pathway"/>
    <property type="evidence" value="ECO:0000315"/>
    <property type="project" value="FlyBase"/>
</dbReference>
<dbReference type="GO" id="GO:2000779">
    <property type="term" value="P:regulation of double-strand break repair"/>
    <property type="evidence" value="ECO:0000318"/>
    <property type="project" value="GO_Central"/>
</dbReference>
<dbReference type="FunFam" id="2.30.29.30:FF:000051">
    <property type="entry name" value="Serine/threonine-protein phosphatase 4 regulatory subunit 3B"/>
    <property type="match status" value="1"/>
</dbReference>
<dbReference type="Gene3D" id="2.30.29.30">
    <property type="entry name" value="Pleckstrin-homology domain (PH domain)/Phosphotyrosine-binding domain (PTB)"/>
    <property type="match status" value="1"/>
</dbReference>
<dbReference type="InterPro" id="IPR016024">
    <property type="entry name" value="ARM-type_fold"/>
</dbReference>
<dbReference type="InterPro" id="IPR055236">
    <property type="entry name" value="EVH1_PP4R3"/>
</dbReference>
<dbReference type="InterPro" id="IPR006887">
    <property type="entry name" value="P4R3-like_central_dom"/>
</dbReference>
<dbReference type="InterPro" id="IPR011993">
    <property type="entry name" value="PH-like_dom_sf"/>
</dbReference>
<dbReference type="InterPro" id="IPR051137">
    <property type="entry name" value="PP4R3-like"/>
</dbReference>
<dbReference type="PANTHER" id="PTHR23318">
    <property type="entry name" value="ATP SYNTHASE GAMMA-RELATED"/>
    <property type="match status" value="1"/>
</dbReference>
<dbReference type="PANTHER" id="PTHR23318:SF0">
    <property type="entry name" value="SERINE_THREONINE-PROTEIN PHOSPHATASE 4 REGULATORY SUBUNIT 3"/>
    <property type="match status" value="1"/>
</dbReference>
<dbReference type="Pfam" id="PF22972">
    <property type="entry name" value="EVH1_PP4R3"/>
    <property type="match status" value="1"/>
</dbReference>
<dbReference type="Pfam" id="PF04802">
    <property type="entry name" value="PP4R3"/>
    <property type="match status" value="1"/>
</dbReference>
<dbReference type="SUPFAM" id="SSF48371">
    <property type="entry name" value="ARM repeat"/>
    <property type="match status" value="1"/>
</dbReference>
<dbReference type="SUPFAM" id="SSF50729">
    <property type="entry name" value="PH domain-like"/>
    <property type="match status" value="1"/>
</dbReference>
<gene>
    <name type="primary">flfl</name>
    <name type="ORF">CG9351</name>
</gene>
<name>PP4R3_DROME</name>
<proteinExistence type="evidence at protein level"/>
<organism>
    <name type="scientific">Drosophila melanogaster</name>
    <name type="common">Fruit fly</name>
    <dbReference type="NCBI Taxonomy" id="7227"/>
    <lineage>
        <taxon>Eukaryota</taxon>
        <taxon>Metazoa</taxon>
        <taxon>Ecdysozoa</taxon>
        <taxon>Arthropoda</taxon>
        <taxon>Hexapoda</taxon>
        <taxon>Insecta</taxon>
        <taxon>Pterygota</taxon>
        <taxon>Neoptera</taxon>
        <taxon>Endopterygota</taxon>
        <taxon>Diptera</taxon>
        <taxon>Brachycera</taxon>
        <taxon>Muscomorpha</taxon>
        <taxon>Ephydroidea</taxon>
        <taxon>Drosophilidae</taxon>
        <taxon>Drosophila</taxon>
        <taxon>Sophophora</taxon>
    </lineage>
</organism>
<keyword id="KW-0002">3D-structure</keyword>
<keyword id="KW-0025">Alternative splicing</keyword>
<keyword id="KW-0963">Cytoplasm</keyword>
<keyword id="KW-0472">Membrane</keyword>
<keyword id="KW-0539">Nucleus</keyword>
<keyword id="KW-1185">Reference proteome</keyword>
<reference key="1">
    <citation type="journal article" date="2000" name="Science">
        <title>The genome sequence of Drosophila melanogaster.</title>
        <authorList>
            <person name="Adams M.D."/>
            <person name="Celniker S.E."/>
            <person name="Holt R.A."/>
            <person name="Evans C.A."/>
            <person name="Gocayne J.D."/>
            <person name="Amanatides P.G."/>
            <person name="Scherer S.E."/>
            <person name="Li P.W."/>
            <person name="Hoskins R.A."/>
            <person name="Galle R.F."/>
            <person name="George R.A."/>
            <person name="Lewis S.E."/>
            <person name="Richards S."/>
            <person name="Ashburner M."/>
            <person name="Henderson S.N."/>
            <person name="Sutton G.G."/>
            <person name="Wortman J.R."/>
            <person name="Yandell M.D."/>
            <person name="Zhang Q."/>
            <person name="Chen L.X."/>
            <person name="Brandon R.C."/>
            <person name="Rogers Y.-H.C."/>
            <person name="Blazej R.G."/>
            <person name="Champe M."/>
            <person name="Pfeiffer B.D."/>
            <person name="Wan K.H."/>
            <person name="Doyle C."/>
            <person name="Baxter E.G."/>
            <person name="Helt G."/>
            <person name="Nelson C.R."/>
            <person name="Miklos G.L.G."/>
            <person name="Abril J.F."/>
            <person name="Agbayani A."/>
            <person name="An H.-J."/>
            <person name="Andrews-Pfannkoch C."/>
            <person name="Baldwin D."/>
            <person name="Ballew R.M."/>
            <person name="Basu A."/>
            <person name="Baxendale J."/>
            <person name="Bayraktaroglu L."/>
            <person name="Beasley E.M."/>
            <person name="Beeson K.Y."/>
            <person name="Benos P.V."/>
            <person name="Berman B.P."/>
            <person name="Bhandari D."/>
            <person name="Bolshakov S."/>
            <person name="Borkova D."/>
            <person name="Botchan M.R."/>
            <person name="Bouck J."/>
            <person name="Brokstein P."/>
            <person name="Brottier P."/>
            <person name="Burtis K.C."/>
            <person name="Busam D.A."/>
            <person name="Butler H."/>
            <person name="Cadieu E."/>
            <person name="Center A."/>
            <person name="Chandra I."/>
            <person name="Cherry J.M."/>
            <person name="Cawley S."/>
            <person name="Dahlke C."/>
            <person name="Davenport L.B."/>
            <person name="Davies P."/>
            <person name="de Pablos B."/>
            <person name="Delcher A."/>
            <person name="Deng Z."/>
            <person name="Mays A.D."/>
            <person name="Dew I."/>
            <person name="Dietz S.M."/>
            <person name="Dodson K."/>
            <person name="Doup L.E."/>
            <person name="Downes M."/>
            <person name="Dugan-Rocha S."/>
            <person name="Dunkov B.C."/>
            <person name="Dunn P."/>
            <person name="Durbin K.J."/>
            <person name="Evangelista C.C."/>
            <person name="Ferraz C."/>
            <person name="Ferriera S."/>
            <person name="Fleischmann W."/>
            <person name="Fosler C."/>
            <person name="Gabrielian A.E."/>
            <person name="Garg N.S."/>
            <person name="Gelbart W.M."/>
            <person name="Glasser K."/>
            <person name="Glodek A."/>
            <person name="Gong F."/>
            <person name="Gorrell J.H."/>
            <person name="Gu Z."/>
            <person name="Guan P."/>
            <person name="Harris M."/>
            <person name="Harris N.L."/>
            <person name="Harvey D.A."/>
            <person name="Heiman T.J."/>
            <person name="Hernandez J.R."/>
            <person name="Houck J."/>
            <person name="Hostin D."/>
            <person name="Houston K.A."/>
            <person name="Howland T.J."/>
            <person name="Wei M.-H."/>
            <person name="Ibegwam C."/>
            <person name="Jalali M."/>
            <person name="Kalush F."/>
            <person name="Karpen G.H."/>
            <person name="Ke Z."/>
            <person name="Kennison J.A."/>
            <person name="Ketchum K.A."/>
            <person name="Kimmel B.E."/>
            <person name="Kodira C.D."/>
            <person name="Kraft C.L."/>
            <person name="Kravitz S."/>
            <person name="Kulp D."/>
            <person name="Lai Z."/>
            <person name="Lasko P."/>
            <person name="Lei Y."/>
            <person name="Levitsky A.A."/>
            <person name="Li J.H."/>
            <person name="Li Z."/>
            <person name="Liang Y."/>
            <person name="Lin X."/>
            <person name="Liu X."/>
            <person name="Mattei B."/>
            <person name="McIntosh T.C."/>
            <person name="McLeod M.P."/>
            <person name="McPherson D."/>
            <person name="Merkulov G."/>
            <person name="Milshina N.V."/>
            <person name="Mobarry C."/>
            <person name="Morris J."/>
            <person name="Moshrefi A."/>
            <person name="Mount S.M."/>
            <person name="Moy M."/>
            <person name="Murphy B."/>
            <person name="Murphy L."/>
            <person name="Muzny D.M."/>
            <person name="Nelson D.L."/>
            <person name="Nelson D.R."/>
            <person name="Nelson K.A."/>
            <person name="Nixon K."/>
            <person name="Nusskern D.R."/>
            <person name="Pacleb J.M."/>
            <person name="Palazzolo M."/>
            <person name="Pittman G.S."/>
            <person name="Pan S."/>
            <person name="Pollard J."/>
            <person name="Puri V."/>
            <person name="Reese M.G."/>
            <person name="Reinert K."/>
            <person name="Remington K."/>
            <person name="Saunders R.D.C."/>
            <person name="Scheeler F."/>
            <person name="Shen H."/>
            <person name="Shue B.C."/>
            <person name="Siden-Kiamos I."/>
            <person name="Simpson M."/>
            <person name="Skupski M.P."/>
            <person name="Smith T.J."/>
            <person name="Spier E."/>
            <person name="Spradling A.C."/>
            <person name="Stapleton M."/>
            <person name="Strong R."/>
            <person name="Sun E."/>
            <person name="Svirskas R."/>
            <person name="Tector C."/>
            <person name="Turner R."/>
            <person name="Venter E."/>
            <person name="Wang A.H."/>
            <person name="Wang X."/>
            <person name="Wang Z.-Y."/>
            <person name="Wassarman D.A."/>
            <person name="Weinstock G.M."/>
            <person name="Weissenbach J."/>
            <person name="Williams S.M."/>
            <person name="Woodage T."/>
            <person name="Worley K.C."/>
            <person name="Wu D."/>
            <person name="Yang S."/>
            <person name="Yao Q.A."/>
            <person name="Ye J."/>
            <person name="Yeh R.-F."/>
            <person name="Zaveri J.S."/>
            <person name="Zhan M."/>
            <person name="Zhang G."/>
            <person name="Zhao Q."/>
            <person name="Zheng L."/>
            <person name="Zheng X.H."/>
            <person name="Zhong F.N."/>
            <person name="Zhong W."/>
            <person name="Zhou X."/>
            <person name="Zhu S.C."/>
            <person name="Zhu X."/>
            <person name="Smith H.O."/>
            <person name="Gibbs R.A."/>
            <person name="Myers E.W."/>
            <person name="Rubin G.M."/>
            <person name="Venter J.C."/>
        </authorList>
    </citation>
    <scope>NUCLEOTIDE SEQUENCE [LARGE SCALE GENOMIC DNA]</scope>
    <source>
        <strain>Berkeley</strain>
    </source>
</reference>
<reference key="2">
    <citation type="journal article" date="2002" name="Genome Biol.">
        <title>Annotation of the Drosophila melanogaster euchromatic genome: a systematic review.</title>
        <authorList>
            <person name="Misra S."/>
            <person name="Crosby M.A."/>
            <person name="Mungall C.J."/>
            <person name="Matthews B.B."/>
            <person name="Campbell K.S."/>
            <person name="Hradecky P."/>
            <person name="Huang Y."/>
            <person name="Kaminker J.S."/>
            <person name="Millburn G.H."/>
            <person name="Prochnik S.E."/>
            <person name="Smith C.D."/>
            <person name="Tupy J.L."/>
            <person name="Whitfield E.J."/>
            <person name="Bayraktaroglu L."/>
            <person name="Berman B.P."/>
            <person name="Bettencourt B.R."/>
            <person name="Celniker S.E."/>
            <person name="de Grey A.D.N.J."/>
            <person name="Drysdale R.A."/>
            <person name="Harris N.L."/>
            <person name="Richter J."/>
            <person name="Russo S."/>
            <person name="Schroeder A.J."/>
            <person name="Shu S.Q."/>
            <person name="Stapleton M."/>
            <person name="Yamada C."/>
            <person name="Ashburner M."/>
            <person name="Gelbart W.M."/>
            <person name="Rubin G.M."/>
            <person name="Lewis S.E."/>
        </authorList>
    </citation>
    <scope>GENOME REANNOTATION</scope>
    <scope>ALTERNATIVE SPLICING</scope>
    <source>
        <strain>Berkeley</strain>
    </source>
</reference>
<reference key="3">
    <citation type="journal article" date="2002" name="Genome Biol.">
        <title>A Drosophila full-length cDNA resource.</title>
        <authorList>
            <person name="Stapleton M."/>
            <person name="Carlson J.W."/>
            <person name="Brokstein P."/>
            <person name="Yu C."/>
            <person name="Champe M."/>
            <person name="George R.A."/>
            <person name="Guarin H."/>
            <person name="Kronmiller B."/>
            <person name="Pacleb J.M."/>
            <person name="Park S."/>
            <person name="Wan K.H."/>
            <person name="Rubin G.M."/>
            <person name="Celniker S.E."/>
        </authorList>
    </citation>
    <scope>NUCLEOTIDE SEQUENCE [LARGE SCALE MRNA] (ISOFORM D)</scope>
    <source>
        <strain>Berkeley</strain>
        <tissue>Embryo</tissue>
    </source>
</reference>
<reference key="4">
    <citation type="journal article" date="2005" name="Mol. Cell. Proteomics">
        <title>A novel, evolutionarily conserved protein phosphatase complex involved in cisplatin sensitivity.</title>
        <authorList>
            <person name="Gingras A.-C."/>
            <person name="Caballero M."/>
            <person name="Zarske M."/>
            <person name="Sanchez A."/>
            <person name="Hazbun T.R."/>
            <person name="Fields S."/>
            <person name="Sonenberg N."/>
            <person name="Hafen E."/>
            <person name="Raught B."/>
            <person name="Aebersold R."/>
        </authorList>
    </citation>
    <scope>FUNCTION</scope>
    <scope>DISRUPTION PHENOTYPE</scope>
</reference>
<reference key="5">
    <citation type="journal article" date="2009" name="Genes Dev.">
        <title>Protein phosphatase 4 mediates localization of the Miranda complex during Drosophila neuroblast asymmetric divisions.</title>
        <authorList>
            <person name="Sousa-Nunes R."/>
            <person name="Chia W."/>
            <person name="Somers W.G."/>
        </authorList>
    </citation>
    <scope>FUNCTION</scope>
    <scope>SUBUNIT</scope>
    <scope>SUBCELLULAR LOCATION</scope>
    <scope>TISSUE SPECIFICITY</scope>
</reference>
<reference key="6">
    <citation type="journal article" date="2008" name="Int. J. Biochem. Cell Biol.">
        <title>Depletion of protein phosphatase 4 in human cells reveals essential roles in centrosome maturation, cell migration and the regulation of Rho GTPases.</title>
        <authorList>
            <person name="Martin-Granados C."/>
            <person name="Philp A."/>
            <person name="Oxenham S.K."/>
            <person name="Prescott A.R."/>
            <person name="Cohen P.T.W."/>
        </authorList>
    </citation>
    <scope>PROBABLE COMPONENT OF A COMPLEX WITH PP4-19C AND PPP4R2R</scope>
    <scope>FUNCTION</scope>
</reference>
<evidence type="ECO:0000256" key="1">
    <source>
        <dbReference type="SAM" id="MobiDB-lite"/>
    </source>
</evidence>
<evidence type="ECO:0000269" key="2">
    <source>
    </source>
</evidence>
<evidence type="ECO:0000269" key="3">
    <source>
    </source>
</evidence>
<evidence type="ECO:0000269" key="4">
    <source>
    </source>
</evidence>
<evidence type="ECO:0000303" key="5">
    <source>
    </source>
</evidence>
<evidence type="ECO:0000305" key="6"/>
<evidence type="ECO:0007829" key="7">
    <source>
        <dbReference type="PDB" id="4WSF"/>
    </source>
</evidence>
<feature type="chain" id="PRO_0000355974" description="Serine/threonine-protein phosphatase 4 regulatory subunit 3">
    <location>
        <begin position="1"/>
        <end position="980"/>
    </location>
</feature>
<feature type="domain" description="WH1">
    <location>
        <begin position="1"/>
        <end position="105"/>
    </location>
</feature>
<feature type="region of interest" description="Disordered" evidence="1">
    <location>
        <begin position="640"/>
        <end position="668"/>
    </location>
</feature>
<feature type="region of interest" description="Disordered" evidence="1">
    <location>
        <begin position="695"/>
        <end position="861"/>
    </location>
</feature>
<feature type="region of interest" description="Disordered" evidence="1">
    <location>
        <begin position="885"/>
        <end position="980"/>
    </location>
</feature>
<feature type="compositionally biased region" description="Polar residues" evidence="1">
    <location>
        <begin position="695"/>
        <end position="708"/>
    </location>
</feature>
<feature type="compositionally biased region" description="Low complexity" evidence="1">
    <location>
        <begin position="709"/>
        <end position="749"/>
    </location>
</feature>
<feature type="compositionally biased region" description="Low complexity" evidence="1">
    <location>
        <begin position="757"/>
        <end position="789"/>
    </location>
</feature>
<feature type="compositionally biased region" description="Low complexity" evidence="1">
    <location>
        <begin position="803"/>
        <end position="859"/>
    </location>
</feature>
<feature type="compositionally biased region" description="Low complexity" evidence="1">
    <location>
        <begin position="885"/>
        <end position="926"/>
    </location>
</feature>
<feature type="compositionally biased region" description="Polar residues" evidence="1">
    <location>
        <begin position="929"/>
        <end position="939"/>
    </location>
</feature>
<feature type="compositionally biased region" description="Basic and acidic residues" evidence="1">
    <location>
        <begin position="940"/>
        <end position="951"/>
    </location>
</feature>
<feature type="compositionally biased region" description="Acidic residues" evidence="1">
    <location>
        <begin position="953"/>
        <end position="968"/>
    </location>
</feature>
<feature type="splice variant" id="VSP_037302" description="In isoform D." evidence="5">
    <location>
        <begin position="651"/>
        <end position="657"/>
    </location>
</feature>
<feature type="strand" evidence="7">
    <location>
        <begin position="8"/>
        <end position="14"/>
    </location>
</feature>
<feature type="strand" evidence="7">
    <location>
        <begin position="20"/>
        <end position="33"/>
    </location>
</feature>
<feature type="helix" evidence="7">
    <location>
        <begin position="34"/>
        <end position="36"/>
    </location>
</feature>
<feature type="strand" evidence="7">
    <location>
        <begin position="38"/>
        <end position="45"/>
    </location>
</feature>
<feature type="turn" evidence="7">
    <location>
        <begin position="46"/>
        <end position="48"/>
    </location>
</feature>
<feature type="strand" evidence="7">
    <location>
        <begin position="51"/>
        <end position="56"/>
    </location>
</feature>
<feature type="strand" evidence="7">
    <location>
        <begin position="64"/>
        <end position="66"/>
    </location>
</feature>
<feature type="turn" evidence="7">
    <location>
        <begin position="67"/>
        <end position="69"/>
    </location>
</feature>
<feature type="strand" evidence="7">
    <location>
        <begin position="70"/>
        <end position="76"/>
    </location>
</feature>
<feature type="strand" evidence="7">
    <location>
        <begin position="79"/>
        <end position="86"/>
    </location>
</feature>
<feature type="helix" evidence="7">
    <location>
        <begin position="88"/>
        <end position="102"/>
    </location>
</feature>
<feature type="strand" evidence="7">
    <location>
        <begin position="109"/>
        <end position="112"/>
    </location>
</feature>
<accession>Q9VFS5</accession>
<accession>Q8MSX6</accession>
<protein>
    <recommendedName>
        <fullName>Serine/threonine-protein phosphatase 4 regulatory subunit 3</fullName>
        <shortName>PP4R3</shortName>
    </recommendedName>
    <alternativeName>
        <fullName>Protein falafel</fullName>
    </alternativeName>
</protein>
<sequence>MTTDTRRRVKLYALNAERQWDDRGTGHVSSTYVERLKGISLLVRAESDGSLLLESKIQPDTAYQKQQDTLIVWSEGDNFDLALSFQEKAGCDEIWEKICQVQGKDPSVEITQDIVEESEDERFEDMSDTAPPIELPPCELSRLEDISETIQSCLSTPLRKEKLSMALESESYIKKLLNLFHVCEDLDNTEGLHHLFEIFKNIFLLNKNALFEIMFADDTIFDVVGCLEYDPSVSQPKKHRQYLKQLAKFREAVPIKNLDLLAKIHQTFRVQYIQDIILPTPSVFVEDNMLNTLSSFIFFNKVEIVTMIQDDERYLLDVFAVLTDPTTGDAKRRDTVLFLKEFCNYAQNLQPQGKDSFYKTLTCLGILQALELTLVMNDKKTKSASIDILTAIVEFSPLVVRNYTLNQANRPEVERMLLNIAIEQMLNDSEPELGIAVQLMGIVKILLEPENMLTEKGDFLNFFYKYSVQTLVAPVILNTIGDRPQNEDYQTAQLLGIVLDILSFCVEHHSYHIKNFLLQKDLLKRILVLMKSTHTFLVLGALRLLRKIIALKDEFYNRHIVKCNLFAPVVDAFIRNNGRYNLLESAILELFEFIKLEDIRTLCVYFVENFSKIFDEIEYVQTFKYLKNRYDQYQDRLKDRDKMENRTDGGLPIIRSGGRFRRDQRQMEEEEEMWFNEEDDFTEEIDTYNNVMKSVSEKNGPQTQNQQKSSPPHSTSPHSGLLGSLSTTASSTATSATSGAPVASGSSSPEAISADEQTQAAVHLAAAALQHHQQQQQQQQQNPFQQQTQPEIAELQQQLSSVEAPQSQELELSQSAAASASPTSSSSSLEASTSSSSASSSSSSSSSSSPPGSSAAASLCDSATVAAVAASQFLSTIATAMAASVTAAAATNSSPSISPAPAVSSPDIENADAQLPPSDDASSPASGEQDANSTEGTSSEADKTTAKKGLVDYESDSGEDDYEEDEYSEGPQAQKRARQA</sequence>
<comment type="function">
    <text evidence="2 3 4">Regulatory subunit of serine/threonine-protein phosphatase 4. The probable PP4 complex Pp4-19C-PPP4R2r-flfl (PPP4C-PPP4R2-PPP4R3) is required to prevent caspase induced cell death (in vitro). May be involved in DNA damage repair. Key mediator specific for the localization of mira and associated cell fate determinants during both interphase and mitosis. Nuclear Flfl is required to exclude mira/pros from the nucleus when inefficiently bound to the cytoskeleton/cortex, whereas cytosolic or membrane-associated flfl is required for the cortical association and asymmetric localization of mira/pros/brat/stau at metaphase and anaphase.</text>
</comment>
<comment type="subunit">
    <text evidence="4">Serine/threonine-protein phosphatase 4 (PP4) occurs in different assemblies of the catalytic and one or more regulatory subunits. Probably part of a PP4 PPP4C-PPP4R2-PPP4R3 complex containing Pp4-19C, PPP4R2r and flfl. Interacts with mira.</text>
</comment>
<comment type="subcellular location">
    <subcellularLocation>
        <location evidence="4">Nucleus</location>
    </subcellularLocation>
    <subcellularLocation>
        <location evidence="4">Membrane</location>
    </subcellularLocation>
    <subcellularLocation>
        <location evidence="4">Cytoplasm</location>
    </subcellularLocation>
    <text>Predominantly nuclear during interphase/prophase and cytoplasmic after nuclear envelope breakdown.</text>
</comment>
<comment type="alternative products">
    <event type="alternative splicing"/>
    <isoform>
        <id>Q9VFS5-1</id>
        <name>B</name>
        <sequence type="displayed"/>
    </isoform>
    <isoform>
        <id>Q9VFS5-2</id>
        <name>D</name>
        <sequence type="described" ref="VSP_037302"/>
    </isoform>
</comment>
<comment type="tissue specificity">
    <text evidence="4">Expressed in neuroblasts.</text>
</comment>
<comment type="disruption phenotype">
    <text evidence="2">Mutant larvae exhibit hypersensitivity to the anticancer drug cisplatin.</text>
</comment>
<comment type="similarity">
    <text evidence="6">Belongs to the SMEK family.</text>
</comment>